<name>SYV_STAA2</name>
<feature type="chain" id="PRO_1000088565" description="Valine--tRNA ligase">
    <location>
        <begin position="1"/>
        <end position="876"/>
    </location>
</feature>
<feature type="coiled-coil region" evidence="1">
    <location>
        <begin position="805"/>
        <end position="876"/>
    </location>
</feature>
<feature type="short sequence motif" description="'HIGH' region">
    <location>
        <begin position="44"/>
        <end position="54"/>
    </location>
</feature>
<feature type="short sequence motif" description="'KMSKS' region">
    <location>
        <begin position="520"/>
        <end position="524"/>
    </location>
</feature>
<feature type="binding site" evidence="1">
    <location>
        <position position="523"/>
    </location>
    <ligand>
        <name>ATP</name>
        <dbReference type="ChEBI" id="CHEBI:30616"/>
    </ligand>
</feature>
<sequence length="876" mass="101724">MEMKPKYDPREVEAGRYEEWVKNGYFKPSEDKSKETYTIVIPPPNVTGKLHLGHAWDTTLQDIITRMKRMQGYDTLYLPGMDHAGIATQAKVEAKLNEQGITRYDLGREKFLEQAWDWKEEYASFIRAQWAKLGLGLDYSRERFTLDEGLSKAVKKVFVDLYNKGIIYRGERIINWDPKARTALSDIEVIHEDVQGAFYHFKYPYADGEGFIEIATTRPETMLGDTAIVVNPNDERYKDVIGKTVILPIVGRELPILADEYVDIDFGSGAMKVTPAHDPNDFEIGQRHQLENIIVMDENGKMNDKAGKYEGMDRFDCRKQLVKDLKEQDLVIKIEDHVHSVGHSERSGAVVEPYLSTQWFVRMEDLAKRSLDNQKTDDRIDFYPQRFEHTFNQWMENIRDWTISRQLWWGHQIPAWYHKETGEIYVGEEAPTDIENWQQDEDVLDTWFSSALWPFSTLGWPDLESEDFKRYYPTNALVTGYDIIFFWVARMIFQGLEFTDRRPFNDVLLHGLVRAEDGRKMSKSLGNGVDPMDVIDEYGADSLRYFLATGSSPGHDLRYSTEKVESVWNFINKIWNGARFSLMNIGEDFKVEDIDLSGNLSLADKWILTRLNETIATVTDLSDKYEFGEVGRALYNFIWDDFCDWYIEMSKIPMNSNDEEQKQVTRSVLSYTLDNIMRMLHPFMPFVTEKIWQSLPHEGDTIVKASWPEVRESLIFEESKQTMQQLVEIIKSVRQSRVEVNTPLSKEIPILIQAKDKEIETTLSQNKDYLIKFCNPSTLNISTDVEIPEKAMTSVVIAGKVVLPLEGLIDMDKEISRLEKELAKLQSELDRVDKKLSNENFVSKAPEKVINEEKRKKQDYQEKYDGVKARIEQLKA</sequence>
<organism>
    <name type="scientific">Staphylococcus aureus (strain JH1)</name>
    <dbReference type="NCBI Taxonomy" id="359787"/>
    <lineage>
        <taxon>Bacteria</taxon>
        <taxon>Bacillati</taxon>
        <taxon>Bacillota</taxon>
        <taxon>Bacilli</taxon>
        <taxon>Bacillales</taxon>
        <taxon>Staphylococcaceae</taxon>
        <taxon>Staphylococcus</taxon>
    </lineage>
</organism>
<reference key="1">
    <citation type="submission" date="2007-06" db="EMBL/GenBank/DDBJ databases">
        <title>Complete sequence of chromosome of Staphylococcus aureus subsp. aureus JH1.</title>
        <authorList>
            <consortium name="US DOE Joint Genome Institute"/>
            <person name="Copeland A."/>
            <person name="Lucas S."/>
            <person name="Lapidus A."/>
            <person name="Barry K."/>
            <person name="Detter J.C."/>
            <person name="Glavina del Rio T."/>
            <person name="Hammon N."/>
            <person name="Israni S."/>
            <person name="Dalin E."/>
            <person name="Tice H."/>
            <person name="Pitluck S."/>
            <person name="Chain P."/>
            <person name="Malfatti S."/>
            <person name="Shin M."/>
            <person name="Vergez L."/>
            <person name="Schmutz J."/>
            <person name="Larimer F."/>
            <person name="Land M."/>
            <person name="Hauser L."/>
            <person name="Kyrpides N."/>
            <person name="Ivanova N."/>
            <person name="Tomasz A."/>
            <person name="Richardson P."/>
        </authorList>
    </citation>
    <scope>NUCLEOTIDE SEQUENCE [LARGE SCALE GENOMIC DNA]</scope>
    <source>
        <strain>JH1</strain>
    </source>
</reference>
<evidence type="ECO:0000255" key="1">
    <source>
        <dbReference type="HAMAP-Rule" id="MF_02004"/>
    </source>
</evidence>
<proteinExistence type="inferred from homology"/>
<dbReference type="EC" id="6.1.1.9" evidence="1"/>
<dbReference type="EMBL" id="CP000736">
    <property type="protein sequence ID" value="ABR52599.1"/>
    <property type="molecule type" value="Genomic_DNA"/>
</dbReference>
<dbReference type="SMR" id="A6U2D1"/>
<dbReference type="KEGG" id="sah:SaurJH1_1755"/>
<dbReference type="HOGENOM" id="CLU_001493_0_2_9"/>
<dbReference type="GO" id="GO:0005829">
    <property type="term" value="C:cytosol"/>
    <property type="evidence" value="ECO:0007669"/>
    <property type="project" value="TreeGrafter"/>
</dbReference>
<dbReference type="GO" id="GO:0002161">
    <property type="term" value="F:aminoacyl-tRNA deacylase activity"/>
    <property type="evidence" value="ECO:0007669"/>
    <property type="project" value="InterPro"/>
</dbReference>
<dbReference type="GO" id="GO:0005524">
    <property type="term" value="F:ATP binding"/>
    <property type="evidence" value="ECO:0007669"/>
    <property type="project" value="UniProtKB-UniRule"/>
</dbReference>
<dbReference type="GO" id="GO:0004832">
    <property type="term" value="F:valine-tRNA ligase activity"/>
    <property type="evidence" value="ECO:0007669"/>
    <property type="project" value="UniProtKB-UniRule"/>
</dbReference>
<dbReference type="GO" id="GO:0006438">
    <property type="term" value="P:valyl-tRNA aminoacylation"/>
    <property type="evidence" value="ECO:0007669"/>
    <property type="project" value="UniProtKB-UniRule"/>
</dbReference>
<dbReference type="CDD" id="cd07962">
    <property type="entry name" value="Anticodon_Ia_Val"/>
    <property type="match status" value="1"/>
</dbReference>
<dbReference type="CDD" id="cd00817">
    <property type="entry name" value="ValRS_core"/>
    <property type="match status" value="1"/>
</dbReference>
<dbReference type="FunFam" id="1.10.287.380:FF:000001">
    <property type="entry name" value="Valine--tRNA ligase"/>
    <property type="match status" value="1"/>
</dbReference>
<dbReference type="FunFam" id="1.10.730.10:FF:000014">
    <property type="entry name" value="Valine--tRNA ligase"/>
    <property type="match status" value="1"/>
</dbReference>
<dbReference type="FunFam" id="3.40.50.620:FF:000032">
    <property type="entry name" value="Valine--tRNA ligase"/>
    <property type="match status" value="1"/>
</dbReference>
<dbReference type="FunFam" id="3.40.50.620:FF:000098">
    <property type="entry name" value="Valine--tRNA ligase"/>
    <property type="match status" value="1"/>
</dbReference>
<dbReference type="FunFam" id="3.90.740.10:FF:000005">
    <property type="entry name" value="Valine--tRNA ligase, mitochondrial"/>
    <property type="match status" value="1"/>
</dbReference>
<dbReference type="Gene3D" id="3.40.50.620">
    <property type="entry name" value="HUPs"/>
    <property type="match status" value="2"/>
</dbReference>
<dbReference type="Gene3D" id="1.10.730.10">
    <property type="entry name" value="Isoleucyl-tRNA Synthetase, Domain 1"/>
    <property type="match status" value="1"/>
</dbReference>
<dbReference type="Gene3D" id="1.10.287.380">
    <property type="entry name" value="Valyl-tRNA synthetase, C-terminal domain"/>
    <property type="match status" value="1"/>
</dbReference>
<dbReference type="Gene3D" id="3.90.740.10">
    <property type="entry name" value="Valyl/Leucyl/Isoleucyl-tRNA synthetase, editing domain"/>
    <property type="match status" value="1"/>
</dbReference>
<dbReference type="HAMAP" id="MF_02004">
    <property type="entry name" value="Val_tRNA_synth_type1"/>
    <property type="match status" value="1"/>
</dbReference>
<dbReference type="InterPro" id="IPR001412">
    <property type="entry name" value="aa-tRNA-synth_I_CS"/>
</dbReference>
<dbReference type="InterPro" id="IPR002300">
    <property type="entry name" value="aa-tRNA-synth_Ia"/>
</dbReference>
<dbReference type="InterPro" id="IPR033705">
    <property type="entry name" value="Anticodon_Ia_Val"/>
</dbReference>
<dbReference type="InterPro" id="IPR013155">
    <property type="entry name" value="M/V/L/I-tRNA-synth_anticd-bd"/>
</dbReference>
<dbReference type="InterPro" id="IPR014729">
    <property type="entry name" value="Rossmann-like_a/b/a_fold"/>
</dbReference>
<dbReference type="InterPro" id="IPR010978">
    <property type="entry name" value="tRNA-bd_arm"/>
</dbReference>
<dbReference type="InterPro" id="IPR009080">
    <property type="entry name" value="tRNAsynth_Ia_anticodon-bd"/>
</dbReference>
<dbReference type="InterPro" id="IPR037118">
    <property type="entry name" value="Val-tRNA_synth_C_sf"/>
</dbReference>
<dbReference type="InterPro" id="IPR019499">
    <property type="entry name" value="Val-tRNA_synth_tRNA-bd"/>
</dbReference>
<dbReference type="InterPro" id="IPR009008">
    <property type="entry name" value="Val/Leu/Ile-tRNA-synth_edit"/>
</dbReference>
<dbReference type="InterPro" id="IPR002303">
    <property type="entry name" value="Valyl-tRNA_ligase"/>
</dbReference>
<dbReference type="NCBIfam" id="NF004349">
    <property type="entry name" value="PRK05729.1"/>
    <property type="match status" value="1"/>
</dbReference>
<dbReference type="NCBIfam" id="TIGR00422">
    <property type="entry name" value="valS"/>
    <property type="match status" value="1"/>
</dbReference>
<dbReference type="PANTHER" id="PTHR11946:SF93">
    <property type="entry name" value="VALINE--TRNA LIGASE, CHLOROPLASTIC_MITOCHONDRIAL 2"/>
    <property type="match status" value="1"/>
</dbReference>
<dbReference type="PANTHER" id="PTHR11946">
    <property type="entry name" value="VALYL-TRNA SYNTHETASES"/>
    <property type="match status" value="1"/>
</dbReference>
<dbReference type="Pfam" id="PF08264">
    <property type="entry name" value="Anticodon_1"/>
    <property type="match status" value="1"/>
</dbReference>
<dbReference type="Pfam" id="PF00133">
    <property type="entry name" value="tRNA-synt_1"/>
    <property type="match status" value="1"/>
</dbReference>
<dbReference type="Pfam" id="PF10458">
    <property type="entry name" value="Val_tRNA-synt_C"/>
    <property type="match status" value="1"/>
</dbReference>
<dbReference type="PRINTS" id="PR00986">
    <property type="entry name" value="TRNASYNTHVAL"/>
</dbReference>
<dbReference type="SUPFAM" id="SSF47323">
    <property type="entry name" value="Anticodon-binding domain of a subclass of class I aminoacyl-tRNA synthetases"/>
    <property type="match status" value="1"/>
</dbReference>
<dbReference type="SUPFAM" id="SSF52374">
    <property type="entry name" value="Nucleotidylyl transferase"/>
    <property type="match status" value="1"/>
</dbReference>
<dbReference type="SUPFAM" id="SSF46589">
    <property type="entry name" value="tRNA-binding arm"/>
    <property type="match status" value="1"/>
</dbReference>
<dbReference type="SUPFAM" id="SSF50677">
    <property type="entry name" value="ValRS/IleRS/LeuRS editing domain"/>
    <property type="match status" value="1"/>
</dbReference>
<dbReference type="PROSITE" id="PS00178">
    <property type="entry name" value="AA_TRNA_LIGASE_I"/>
    <property type="match status" value="1"/>
</dbReference>
<accession>A6U2D1</accession>
<protein>
    <recommendedName>
        <fullName evidence="1">Valine--tRNA ligase</fullName>
        <ecNumber evidence="1">6.1.1.9</ecNumber>
    </recommendedName>
    <alternativeName>
        <fullName evidence="1">Valyl-tRNA synthetase</fullName>
        <shortName evidence="1">ValRS</shortName>
    </alternativeName>
</protein>
<comment type="function">
    <text evidence="1">Catalyzes the attachment of valine to tRNA(Val). As ValRS can inadvertently accommodate and process structurally similar amino acids such as threonine, to avoid such errors, it has a 'posttransfer' editing activity that hydrolyzes mischarged Thr-tRNA(Val) in a tRNA-dependent manner.</text>
</comment>
<comment type="catalytic activity">
    <reaction evidence="1">
        <text>tRNA(Val) + L-valine + ATP = L-valyl-tRNA(Val) + AMP + diphosphate</text>
        <dbReference type="Rhea" id="RHEA:10704"/>
        <dbReference type="Rhea" id="RHEA-COMP:9672"/>
        <dbReference type="Rhea" id="RHEA-COMP:9708"/>
        <dbReference type="ChEBI" id="CHEBI:30616"/>
        <dbReference type="ChEBI" id="CHEBI:33019"/>
        <dbReference type="ChEBI" id="CHEBI:57762"/>
        <dbReference type="ChEBI" id="CHEBI:78442"/>
        <dbReference type="ChEBI" id="CHEBI:78537"/>
        <dbReference type="ChEBI" id="CHEBI:456215"/>
        <dbReference type="EC" id="6.1.1.9"/>
    </reaction>
</comment>
<comment type="subunit">
    <text evidence="1">Monomer.</text>
</comment>
<comment type="subcellular location">
    <subcellularLocation>
        <location evidence="1">Cytoplasm</location>
    </subcellularLocation>
</comment>
<comment type="domain">
    <text evidence="1">ValRS has two distinct active sites: one for aminoacylation and one for editing. The misactivated threonine is translocated from the active site to the editing site.</text>
</comment>
<comment type="domain">
    <text evidence="1">The C-terminal coiled-coil domain is crucial for aminoacylation activity.</text>
</comment>
<comment type="similarity">
    <text evidence="1">Belongs to the class-I aminoacyl-tRNA synthetase family. ValS type 1 subfamily.</text>
</comment>
<gene>
    <name evidence="1" type="primary">valS</name>
    <name type="ordered locus">SaurJH1_1755</name>
</gene>
<keyword id="KW-0030">Aminoacyl-tRNA synthetase</keyword>
<keyword id="KW-0067">ATP-binding</keyword>
<keyword id="KW-0175">Coiled coil</keyword>
<keyword id="KW-0963">Cytoplasm</keyword>
<keyword id="KW-0436">Ligase</keyword>
<keyword id="KW-0547">Nucleotide-binding</keyword>
<keyword id="KW-0648">Protein biosynthesis</keyword>